<evidence type="ECO:0000255" key="1">
    <source>
        <dbReference type="HAMAP-Rule" id="MF_01338"/>
    </source>
</evidence>
<feature type="chain" id="PRO_0000251444" description="Ribulose bisphosphate carboxylase large chain">
    <location>
        <begin position="1"/>
        <end position="476"/>
    </location>
</feature>
<feature type="active site" description="Proton acceptor" evidence="1">
    <location>
        <position position="176"/>
    </location>
</feature>
<feature type="active site" description="Proton acceptor" evidence="1">
    <location>
        <position position="295"/>
    </location>
</feature>
<feature type="binding site" description="in homodimeric partner" evidence="1">
    <location>
        <position position="124"/>
    </location>
    <ligand>
        <name>substrate</name>
    </ligand>
</feature>
<feature type="binding site" evidence="1">
    <location>
        <position position="174"/>
    </location>
    <ligand>
        <name>substrate</name>
    </ligand>
</feature>
<feature type="binding site" evidence="1">
    <location>
        <position position="178"/>
    </location>
    <ligand>
        <name>substrate</name>
    </ligand>
</feature>
<feature type="binding site" description="via carbamate group" evidence="1">
    <location>
        <position position="202"/>
    </location>
    <ligand>
        <name>Mg(2+)</name>
        <dbReference type="ChEBI" id="CHEBI:18420"/>
    </ligand>
</feature>
<feature type="binding site" evidence="1">
    <location>
        <position position="204"/>
    </location>
    <ligand>
        <name>Mg(2+)</name>
        <dbReference type="ChEBI" id="CHEBI:18420"/>
    </ligand>
</feature>
<feature type="binding site" evidence="1">
    <location>
        <position position="205"/>
    </location>
    <ligand>
        <name>Mg(2+)</name>
        <dbReference type="ChEBI" id="CHEBI:18420"/>
    </ligand>
</feature>
<feature type="binding site" evidence="1">
    <location>
        <position position="296"/>
    </location>
    <ligand>
        <name>substrate</name>
    </ligand>
</feature>
<feature type="binding site" evidence="1">
    <location>
        <position position="328"/>
    </location>
    <ligand>
        <name>substrate</name>
    </ligand>
</feature>
<feature type="binding site" evidence="1">
    <location>
        <position position="380"/>
    </location>
    <ligand>
        <name>substrate</name>
    </ligand>
</feature>
<feature type="site" description="Transition state stabilizer" evidence="1">
    <location>
        <position position="335"/>
    </location>
</feature>
<feature type="modified residue" description="N6-carboxylysine" evidence="1">
    <location>
        <position position="202"/>
    </location>
</feature>
<feature type="disulfide bond" description="Interchain; in linked form" evidence="1">
    <location>
        <position position="248"/>
    </location>
</feature>
<keyword id="KW-1283">Bacterial microcompartment</keyword>
<keyword id="KW-0113">Calvin cycle</keyword>
<keyword id="KW-0120">Carbon dioxide fixation</keyword>
<keyword id="KW-1282">Carboxysome</keyword>
<keyword id="KW-1015">Disulfide bond</keyword>
<keyword id="KW-0456">Lyase</keyword>
<keyword id="KW-0460">Magnesium</keyword>
<keyword id="KW-0479">Metal-binding</keyword>
<keyword id="KW-0503">Monooxygenase</keyword>
<keyword id="KW-0560">Oxidoreductase</keyword>
<keyword id="KW-0601">Photorespiration</keyword>
<keyword id="KW-0602">Photosynthesis</keyword>
<reference key="1">
    <citation type="journal article" date="2014" name="Stand. Genomic Sci.">
        <title>Complete genome sequence of Anabaena variabilis ATCC 29413.</title>
        <authorList>
            <person name="Thiel T."/>
            <person name="Pratte B.S."/>
            <person name="Zhong J."/>
            <person name="Goodwin L."/>
            <person name="Copeland A."/>
            <person name="Lucas S."/>
            <person name="Han C."/>
            <person name="Pitluck S."/>
            <person name="Land M.L."/>
            <person name="Kyrpides N.C."/>
            <person name="Woyke T."/>
        </authorList>
    </citation>
    <scope>NUCLEOTIDE SEQUENCE [LARGE SCALE GENOMIC DNA]</scope>
    <source>
        <strain>ATCC 29413 / PCC 7937</strain>
    </source>
</reference>
<comment type="function">
    <text evidence="1">RuBisCO catalyzes two reactions: the carboxylation of D-ribulose 1,5-bisphosphate, the primary event in carbon dioxide fixation, as well as the oxidative fragmentation of the pentose substrate in the photorespiration process. Both reactions occur simultaneously and in competition at the same active site.</text>
</comment>
<comment type="catalytic activity">
    <reaction evidence="1">
        <text>2 (2R)-3-phosphoglycerate + 2 H(+) = D-ribulose 1,5-bisphosphate + CO2 + H2O</text>
        <dbReference type="Rhea" id="RHEA:23124"/>
        <dbReference type="ChEBI" id="CHEBI:15377"/>
        <dbReference type="ChEBI" id="CHEBI:15378"/>
        <dbReference type="ChEBI" id="CHEBI:16526"/>
        <dbReference type="ChEBI" id="CHEBI:57870"/>
        <dbReference type="ChEBI" id="CHEBI:58272"/>
        <dbReference type="EC" id="4.1.1.39"/>
    </reaction>
</comment>
<comment type="catalytic activity">
    <reaction evidence="1">
        <text>D-ribulose 1,5-bisphosphate + O2 = 2-phosphoglycolate + (2R)-3-phosphoglycerate + 2 H(+)</text>
        <dbReference type="Rhea" id="RHEA:36631"/>
        <dbReference type="ChEBI" id="CHEBI:15378"/>
        <dbReference type="ChEBI" id="CHEBI:15379"/>
        <dbReference type="ChEBI" id="CHEBI:57870"/>
        <dbReference type="ChEBI" id="CHEBI:58033"/>
        <dbReference type="ChEBI" id="CHEBI:58272"/>
    </reaction>
</comment>
<comment type="cofactor">
    <cofactor evidence="1">
        <name>Mg(2+)</name>
        <dbReference type="ChEBI" id="CHEBI:18420"/>
    </cofactor>
    <text evidence="1">Binds 1 Mg(2+) ion per subunit.</text>
</comment>
<comment type="subunit">
    <text evidence="1">Heterohexadecamer of 8 large chains and 8 small chains; disulfide-linked. The disulfide link is formed within the large subunit homodimers.</text>
</comment>
<comment type="subcellular location">
    <subcellularLocation>
        <location evidence="1">Carboxysome</location>
    </subcellularLocation>
</comment>
<comment type="PTM">
    <text evidence="1">The disulfide bond which can form in the large chain dimeric partners within the hexadecamer appears to be associated with oxidative stress and protein turnover.</text>
</comment>
<comment type="miscellaneous">
    <text evidence="1">The basic functional RuBisCO is composed of a large chain homodimer in a 'head-to-tail' conformation. In form I RuBisCO this homodimer is arranged in a barrel-like tetramer with the small subunits forming a tetrameric 'cap' on each end of the 'barrel'.</text>
</comment>
<comment type="similarity">
    <text evidence="1">Belongs to the RuBisCO large chain family. Type I subfamily.</text>
</comment>
<protein>
    <recommendedName>
        <fullName evidence="1">Ribulose bisphosphate carboxylase large chain</fullName>
        <shortName evidence="1">RuBisCO large subunit</shortName>
        <ecNumber evidence="1">4.1.1.39</ecNumber>
    </recommendedName>
</protein>
<dbReference type="EC" id="4.1.1.39" evidence="1"/>
<dbReference type="EMBL" id="CP000117">
    <property type="protein sequence ID" value="ABA23512.1"/>
    <property type="molecule type" value="Genomic_DNA"/>
</dbReference>
<dbReference type="SMR" id="Q3M674"/>
<dbReference type="STRING" id="240292.Ava_3907"/>
<dbReference type="KEGG" id="ava:Ava_3907"/>
<dbReference type="eggNOG" id="COG1850">
    <property type="taxonomic scope" value="Bacteria"/>
</dbReference>
<dbReference type="HOGENOM" id="CLU_031450_2_0_3"/>
<dbReference type="Proteomes" id="UP000002533">
    <property type="component" value="Chromosome"/>
</dbReference>
<dbReference type="GO" id="GO:0031470">
    <property type="term" value="C:carboxysome"/>
    <property type="evidence" value="ECO:0007669"/>
    <property type="project" value="UniProtKB-SubCell"/>
</dbReference>
<dbReference type="GO" id="GO:0000287">
    <property type="term" value="F:magnesium ion binding"/>
    <property type="evidence" value="ECO:0007669"/>
    <property type="project" value="UniProtKB-UniRule"/>
</dbReference>
<dbReference type="GO" id="GO:0004497">
    <property type="term" value="F:monooxygenase activity"/>
    <property type="evidence" value="ECO:0007669"/>
    <property type="project" value="UniProtKB-KW"/>
</dbReference>
<dbReference type="GO" id="GO:0016984">
    <property type="term" value="F:ribulose-bisphosphate carboxylase activity"/>
    <property type="evidence" value="ECO:0007669"/>
    <property type="project" value="UniProtKB-UniRule"/>
</dbReference>
<dbReference type="GO" id="GO:0009853">
    <property type="term" value="P:photorespiration"/>
    <property type="evidence" value="ECO:0007669"/>
    <property type="project" value="UniProtKB-KW"/>
</dbReference>
<dbReference type="GO" id="GO:0019253">
    <property type="term" value="P:reductive pentose-phosphate cycle"/>
    <property type="evidence" value="ECO:0007669"/>
    <property type="project" value="UniProtKB-UniRule"/>
</dbReference>
<dbReference type="CDD" id="cd08212">
    <property type="entry name" value="RuBisCO_large_I"/>
    <property type="match status" value="1"/>
</dbReference>
<dbReference type="Gene3D" id="3.20.20.110">
    <property type="entry name" value="Ribulose bisphosphate carboxylase, large subunit, C-terminal domain"/>
    <property type="match status" value="1"/>
</dbReference>
<dbReference type="Gene3D" id="3.30.70.150">
    <property type="entry name" value="RuBisCO large subunit, N-terminal domain"/>
    <property type="match status" value="1"/>
</dbReference>
<dbReference type="HAMAP" id="MF_01338">
    <property type="entry name" value="RuBisCO_L_type1"/>
    <property type="match status" value="1"/>
</dbReference>
<dbReference type="InterPro" id="IPR033966">
    <property type="entry name" value="RuBisCO"/>
</dbReference>
<dbReference type="InterPro" id="IPR020878">
    <property type="entry name" value="RuBisCo_large_chain_AS"/>
</dbReference>
<dbReference type="InterPro" id="IPR000685">
    <property type="entry name" value="RuBisCO_lsu_C"/>
</dbReference>
<dbReference type="InterPro" id="IPR036376">
    <property type="entry name" value="RuBisCO_lsu_C_sf"/>
</dbReference>
<dbReference type="InterPro" id="IPR017443">
    <property type="entry name" value="RuBisCO_lsu_fd_N"/>
</dbReference>
<dbReference type="InterPro" id="IPR036422">
    <property type="entry name" value="RuBisCO_lsu_N_sf"/>
</dbReference>
<dbReference type="InterPro" id="IPR020888">
    <property type="entry name" value="RuBisCO_lsuI"/>
</dbReference>
<dbReference type="NCBIfam" id="NF003252">
    <property type="entry name" value="PRK04208.1"/>
    <property type="match status" value="1"/>
</dbReference>
<dbReference type="PANTHER" id="PTHR42704">
    <property type="entry name" value="RIBULOSE BISPHOSPHATE CARBOXYLASE"/>
    <property type="match status" value="1"/>
</dbReference>
<dbReference type="PANTHER" id="PTHR42704:SF17">
    <property type="entry name" value="RIBULOSE BISPHOSPHATE CARBOXYLASE LARGE CHAIN"/>
    <property type="match status" value="1"/>
</dbReference>
<dbReference type="Pfam" id="PF00016">
    <property type="entry name" value="RuBisCO_large"/>
    <property type="match status" value="1"/>
</dbReference>
<dbReference type="Pfam" id="PF02788">
    <property type="entry name" value="RuBisCO_large_N"/>
    <property type="match status" value="1"/>
</dbReference>
<dbReference type="SFLD" id="SFLDG01052">
    <property type="entry name" value="RuBisCO"/>
    <property type="match status" value="1"/>
</dbReference>
<dbReference type="SFLD" id="SFLDS00014">
    <property type="entry name" value="RuBisCO"/>
    <property type="match status" value="1"/>
</dbReference>
<dbReference type="SFLD" id="SFLDG00301">
    <property type="entry name" value="RuBisCO-like_proteins"/>
    <property type="match status" value="1"/>
</dbReference>
<dbReference type="SUPFAM" id="SSF51649">
    <property type="entry name" value="RuBisCo, C-terminal domain"/>
    <property type="match status" value="1"/>
</dbReference>
<dbReference type="SUPFAM" id="SSF54966">
    <property type="entry name" value="RuBisCO, large subunit, small (N-terminal) domain"/>
    <property type="match status" value="1"/>
</dbReference>
<dbReference type="PROSITE" id="PS00157">
    <property type="entry name" value="RUBISCO_LARGE"/>
    <property type="match status" value="1"/>
</dbReference>
<accession>Q3M674</accession>
<proteinExistence type="inferred from homology"/>
<name>RBL_TRIV2</name>
<sequence length="476" mass="53033">MSYAQTKTQTKSGYKAGVQDYRLTYYTPDYTPKDTDILAAFRVTPQPGVPFEEAAAAVAAESSTGTWTTVWTDLLTDLDRYKGRCYDIEPVPGEDNQFIAYIAYPLDLFEEGSITNVLTSIVGNVFGFKALRALRLEDIRFPVAYIKTFQGPPHGIQVERDKLNKYGRPLLGCTIKPKLGLSAKNYGRAVYECLRGGLDFTKDDENINSAPFQRWRDRFLFVSDAISKAQAETGEIKGHYLNVTAPTCEEMLKRAEYAKELNQPIIMHDYLTAGFTANTTLARWCRDNGVLLHIHRAMHAVIDRQKNHGIHFRVLAKALRLSGGDHIHTGTVVGKLEGERGITMGFVDLLRENYVEQDKSRGIYFTQDWASLPGVMAVASGGIHVWHMPALVEIFGDDSVLQFGGGTLGHPWGNAPGATANRVALEACVQARNEGRNLAREGNDVIREAAKWSPELAVACELWKEIKFEFEAMDTV</sequence>
<organism>
    <name type="scientific">Trichormus variabilis (strain ATCC 29413 / PCC 7937)</name>
    <name type="common">Anabaena variabilis</name>
    <dbReference type="NCBI Taxonomy" id="240292"/>
    <lineage>
        <taxon>Bacteria</taxon>
        <taxon>Bacillati</taxon>
        <taxon>Cyanobacteriota</taxon>
        <taxon>Cyanophyceae</taxon>
        <taxon>Nostocales</taxon>
        <taxon>Nostocaceae</taxon>
        <taxon>Trichormus</taxon>
    </lineage>
</organism>
<gene>
    <name evidence="1" type="primary">cbbL</name>
    <name evidence="1" type="synonym">rbcL</name>
    <name type="ordered locus">Ava_3907</name>
</gene>